<organism>
    <name type="scientific">Cutibacterium acnes (strain DSM 16379 / KPA171202)</name>
    <name type="common">Propionibacterium acnes</name>
    <dbReference type="NCBI Taxonomy" id="267747"/>
    <lineage>
        <taxon>Bacteria</taxon>
        <taxon>Bacillati</taxon>
        <taxon>Actinomycetota</taxon>
        <taxon>Actinomycetes</taxon>
        <taxon>Propionibacteriales</taxon>
        <taxon>Propionibacteriaceae</taxon>
        <taxon>Cutibacterium</taxon>
    </lineage>
</organism>
<reference key="1">
    <citation type="journal article" date="2004" name="Science">
        <title>The complete genome sequence of Propionibacterium acnes, a commensal of human skin.</title>
        <authorList>
            <person name="Brueggemann H."/>
            <person name="Henne A."/>
            <person name="Hoster F."/>
            <person name="Liesegang H."/>
            <person name="Wiezer A."/>
            <person name="Strittmatter A."/>
            <person name="Hujer S."/>
            <person name="Duerre P."/>
            <person name="Gottschalk G."/>
        </authorList>
    </citation>
    <scope>NUCLEOTIDE SEQUENCE [LARGE SCALE GENOMIC DNA]</scope>
    <source>
        <strain>DSM 16379 / KPA171202</strain>
    </source>
</reference>
<proteinExistence type="inferred from homology"/>
<name>GCSP_CUTAK</name>
<feature type="chain" id="PRO_0000227114" description="Glycine dehydrogenase (decarboxylating)">
    <location>
        <begin position="1"/>
        <end position="994"/>
    </location>
</feature>
<feature type="region of interest" description="Disordered" evidence="2">
    <location>
        <begin position="1"/>
        <end position="20"/>
    </location>
</feature>
<feature type="modified residue" description="N6-(pyridoxal phosphate)lysine" evidence="1">
    <location>
        <position position="716"/>
    </location>
</feature>
<gene>
    <name evidence="1" type="primary">gcvP</name>
    <name type="ordered locus">PPA0742</name>
</gene>
<evidence type="ECO:0000255" key="1">
    <source>
        <dbReference type="HAMAP-Rule" id="MF_00711"/>
    </source>
</evidence>
<evidence type="ECO:0000256" key="2">
    <source>
        <dbReference type="SAM" id="MobiDB-lite"/>
    </source>
</evidence>
<dbReference type="EC" id="1.4.4.2" evidence="1"/>
<dbReference type="EMBL" id="AE017283">
    <property type="protein sequence ID" value="AAT82498.1"/>
    <property type="molecule type" value="Genomic_DNA"/>
</dbReference>
<dbReference type="SMR" id="Q6A9R8"/>
<dbReference type="EnsemblBacteria" id="AAT82498">
    <property type="protein sequence ID" value="AAT82498"/>
    <property type="gene ID" value="PPA0742"/>
</dbReference>
<dbReference type="KEGG" id="pac:PPA0742"/>
<dbReference type="eggNOG" id="COG0403">
    <property type="taxonomic scope" value="Bacteria"/>
</dbReference>
<dbReference type="eggNOG" id="COG1003">
    <property type="taxonomic scope" value="Bacteria"/>
</dbReference>
<dbReference type="HOGENOM" id="CLU_004620_2_0_11"/>
<dbReference type="Proteomes" id="UP000000603">
    <property type="component" value="Chromosome"/>
</dbReference>
<dbReference type="GO" id="GO:0005829">
    <property type="term" value="C:cytosol"/>
    <property type="evidence" value="ECO:0007669"/>
    <property type="project" value="TreeGrafter"/>
</dbReference>
<dbReference type="GO" id="GO:0005960">
    <property type="term" value="C:glycine cleavage complex"/>
    <property type="evidence" value="ECO:0007669"/>
    <property type="project" value="TreeGrafter"/>
</dbReference>
<dbReference type="GO" id="GO:0016594">
    <property type="term" value="F:glycine binding"/>
    <property type="evidence" value="ECO:0007669"/>
    <property type="project" value="TreeGrafter"/>
</dbReference>
<dbReference type="GO" id="GO:0004375">
    <property type="term" value="F:glycine dehydrogenase (decarboxylating) activity"/>
    <property type="evidence" value="ECO:0007669"/>
    <property type="project" value="UniProtKB-EC"/>
</dbReference>
<dbReference type="GO" id="GO:0030170">
    <property type="term" value="F:pyridoxal phosphate binding"/>
    <property type="evidence" value="ECO:0007669"/>
    <property type="project" value="TreeGrafter"/>
</dbReference>
<dbReference type="GO" id="GO:0019464">
    <property type="term" value="P:glycine decarboxylation via glycine cleavage system"/>
    <property type="evidence" value="ECO:0007669"/>
    <property type="project" value="UniProtKB-UniRule"/>
</dbReference>
<dbReference type="CDD" id="cd00613">
    <property type="entry name" value="GDC-P"/>
    <property type="match status" value="1"/>
</dbReference>
<dbReference type="FunFam" id="3.40.640.10:FF:000224">
    <property type="entry name" value="Probable glycine dehydrogenase (decarboxylating) subunit 2"/>
    <property type="match status" value="1"/>
</dbReference>
<dbReference type="Gene3D" id="3.90.1150.10">
    <property type="entry name" value="Aspartate Aminotransferase, domain 1"/>
    <property type="match status" value="2"/>
</dbReference>
<dbReference type="Gene3D" id="3.40.640.10">
    <property type="entry name" value="Type I PLP-dependent aspartate aminotransferase-like (Major domain)"/>
    <property type="match status" value="2"/>
</dbReference>
<dbReference type="HAMAP" id="MF_00711">
    <property type="entry name" value="GcvP"/>
    <property type="match status" value="1"/>
</dbReference>
<dbReference type="InterPro" id="IPR003437">
    <property type="entry name" value="GcvP"/>
</dbReference>
<dbReference type="InterPro" id="IPR049316">
    <property type="entry name" value="GDC-P_C"/>
</dbReference>
<dbReference type="InterPro" id="IPR049315">
    <property type="entry name" value="GDC-P_N"/>
</dbReference>
<dbReference type="InterPro" id="IPR020581">
    <property type="entry name" value="GDC_P"/>
</dbReference>
<dbReference type="InterPro" id="IPR015424">
    <property type="entry name" value="PyrdxlP-dep_Trfase"/>
</dbReference>
<dbReference type="InterPro" id="IPR015421">
    <property type="entry name" value="PyrdxlP-dep_Trfase_major"/>
</dbReference>
<dbReference type="InterPro" id="IPR015422">
    <property type="entry name" value="PyrdxlP-dep_Trfase_small"/>
</dbReference>
<dbReference type="NCBIfam" id="TIGR00461">
    <property type="entry name" value="gcvP"/>
    <property type="match status" value="1"/>
</dbReference>
<dbReference type="NCBIfam" id="NF003346">
    <property type="entry name" value="PRK04366.1"/>
    <property type="match status" value="1"/>
</dbReference>
<dbReference type="PANTHER" id="PTHR11773:SF1">
    <property type="entry name" value="GLYCINE DEHYDROGENASE (DECARBOXYLATING), MITOCHONDRIAL"/>
    <property type="match status" value="1"/>
</dbReference>
<dbReference type="PANTHER" id="PTHR11773">
    <property type="entry name" value="GLYCINE DEHYDROGENASE, DECARBOXYLATING"/>
    <property type="match status" value="1"/>
</dbReference>
<dbReference type="Pfam" id="PF21478">
    <property type="entry name" value="GcvP2_C"/>
    <property type="match status" value="1"/>
</dbReference>
<dbReference type="Pfam" id="PF02347">
    <property type="entry name" value="GDC-P"/>
    <property type="match status" value="2"/>
</dbReference>
<dbReference type="SUPFAM" id="SSF53383">
    <property type="entry name" value="PLP-dependent transferases"/>
    <property type="match status" value="2"/>
</dbReference>
<comment type="function">
    <text evidence="1">The glycine cleavage system catalyzes the degradation of glycine. The P protein binds the alpha-amino group of glycine through its pyridoxal phosphate cofactor; CO(2) is released and the remaining methylamine moiety is then transferred to the lipoamide cofactor of the H protein.</text>
</comment>
<comment type="catalytic activity">
    <reaction evidence="1">
        <text>N(6)-[(R)-lipoyl]-L-lysyl-[glycine-cleavage complex H protein] + glycine + H(+) = N(6)-[(R)-S(8)-aminomethyldihydrolipoyl]-L-lysyl-[glycine-cleavage complex H protein] + CO2</text>
        <dbReference type="Rhea" id="RHEA:24304"/>
        <dbReference type="Rhea" id="RHEA-COMP:10494"/>
        <dbReference type="Rhea" id="RHEA-COMP:10495"/>
        <dbReference type="ChEBI" id="CHEBI:15378"/>
        <dbReference type="ChEBI" id="CHEBI:16526"/>
        <dbReference type="ChEBI" id="CHEBI:57305"/>
        <dbReference type="ChEBI" id="CHEBI:83099"/>
        <dbReference type="ChEBI" id="CHEBI:83143"/>
        <dbReference type="EC" id="1.4.4.2"/>
    </reaction>
</comment>
<comment type="cofactor">
    <cofactor evidence="1">
        <name>pyridoxal 5'-phosphate</name>
        <dbReference type="ChEBI" id="CHEBI:597326"/>
    </cofactor>
</comment>
<comment type="subunit">
    <text evidence="1">The glycine cleavage system is composed of four proteins: P, T, L and H.</text>
</comment>
<comment type="similarity">
    <text evidence="1">Belongs to the GcvP family.</text>
</comment>
<keyword id="KW-0560">Oxidoreductase</keyword>
<keyword id="KW-0663">Pyridoxal phosphate</keyword>
<accession>Q6A9R8</accession>
<sequence>MTDHAENRCGLEGPRPFSSRHVGSVEDDLRYIAETIGVTSPEQIIRDAIPASVLDSNEGDSSVRTPSFPPAADETTARAELVEIASGNRVTRALIGRGYYGTLTPPVIRRNILENPSWYTAYTPYQPEISQGRLEMLTIYQQLITDLTGLALANSSLLDEATAASEGMLLARRAARKVKSNRFLVHTHLFDQVRDVVLGHAEATGIEVVETDLRDPQSWRPEVEAGCFGVLAPYPDSTGALWNPSEVFDAVHKVGGITIAECDLLSLTLLAPPGELGADVAVGSSQRFGVPMGNGGPHAAYMSVRSGLERQIPGRLVGVSTDADGNPAYRLALQTREQHIRRDKATSNICTAQVLLAVVAAAYAVWHGPTGLTRIARQVTDRAHQLASALRAAGLDVADQQFFDTIRIRTKGGAKELWNRAREGGYTLDLVDGDILQISVDETVTDDELRELTQLLGGSTDEIRGPADRAWPEDLRRTSSFMTHPVFSSYHTETTMMRYLKRLADHDYGLDRGMIPLGSCTMKLNAAAEMEAMTWPAFSQMHPFAPVEDQAGSLRLIRDLEIWLAELTGYDTVSLQPNAGSQGEYTGLAAIRSYHVSRGDTERNVCLVPASAHGTNAASAASAGLRVVVVKSNDDGTIDRDDLAAKIAANEGRIAAIMITYPSTHGVYEDGVRQVCDMVHEAGGQVYIDGANFNALVGWGQFARIGGDVSHLNLHKTFAIPHGGGGPGVGPVAAKAHLAPFLPGHPLNPRNEHPLNDGGTVTHDGHAVSAAPFGSVSVLPISWAYLRLMGLKGLQFATEVAVLNANYIAHRLHDKIPILYTGQNGYVAHECILDLRPLTTETGITVDDVAKRLIDYGFHAPTMSFPVAGTLMVEPTESEDLAELDRFCDAMLAIVEEARMVQSGHWPANDNPLINAPHPAARLVADEWNHPYSRELGCYPGMRLGIQRDQERGLDVNTVTRIQAKYWPPVGRVDNTYGDRHLVCSCPPPEAFED</sequence>
<protein>
    <recommendedName>
        <fullName evidence="1">Glycine dehydrogenase (decarboxylating)</fullName>
        <ecNumber evidence="1">1.4.4.2</ecNumber>
    </recommendedName>
    <alternativeName>
        <fullName evidence="1">Glycine cleavage system P-protein</fullName>
    </alternativeName>
    <alternativeName>
        <fullName evidence="1">Glycine decarboxylase</fullName>
    </alternativeName>
    <alternativeName>
        <fullName evidence="1">Glycine dehydrogenase (aminomethyl-transferring)</fullName>
    </alternativeName>
</protein>